<reference key="1">
    <citation type="journal article" date="2005" name="Nature">
        <title>Genome sequencing and analysis of Aspergillus oryzae.</title>
        <authorList>
            <person name="Machida M."/>
            <person name="Asai K."/>
            <person name="Sano M."/>
            <person name="Tanaka T."/>
            <person name="Kumagai T."/>
            <person name="Terai G."/>
            <person name="Kusumoto K."/>
            <person name="Arima T."/>
            <person name="Akita O."/>
            <person name="Kashiwagi Y."/>
            <person name="Abe K."/>
            <person name="Gomi K."/>
            <person name="Horiuchi H."/>
            <person name="Kitamoto K."/>
            <person name="Kobayashi T."/>
            <person name="Takeuchi M."/>
            <person name="Denning D.W."/>
            <person name="Galagan J.E."/>
            <person name="Nierman W.C."/>
            <person name="Yu J."/>
            <person name="Archer D.B."/>
            <person name="Bennett J.W."/>
            <person name="Bhatnagar D."/>
            <person name="Cleveland T.E."/>
            <person name="Fedorova N.D."/>
            <person name="Gotoh O."/>
            <person name="Horikawa H."/>
            <person name="Hosoyama A."/>
            <person name="Ichinomiya M."/>
            <person name="Igarashi R."/>
            <person name="Iwashita K."/>
            <person name="Juvvadi P.R."/>
            <person name="Kato M."/>
            <person name="Kato Y."/>
            <person name="Kin T."/>
            <person name="Kokubun A."/>
            <person name="Maeda H."/>
            <person name="Maeyama N."/>
            <person name="Maruyama J."/>
            <person name="Nagasaki H."/>
            <person name="Nakajima T."/>
            <person name="Oda K."/>
            <person name="Okada K."/>
            <person name="Paulsen I."/>
            <person name="Sakamoto K."/>
            <person name="Sawano T."/>
            <person name="Takahashi M."/>
            <person name="Takase K."/>
            <person name="Terabayashi Y."/>
            <person name="Wortman J.R."/>
            <person name="Yamada O."/>
            <person name="Yamagata Y."/>
            <person name="Anazawa H."/>
            <person name="Hata Y."/>
            <person name="Koide Y."/>
            <person name="Komori T."/>
            <person name="Koyama Y."/>
            <person name="Minetoki T."/>
            <person name="Suharnan S."/>
            <person name="Tanaka A."/>
            <person name="Isono K."/>
            <person name="Kuhara S."/>
            <person name="Ogasawara N."/>
            <person name="Kikuchi H."/>
        </authorList>
    </citation>
    <scope>NUCLEOTIDE SEQUENCE [LARGE SCALE GENOMIC DNA]</scope>
    <source>
        <strain>ATCC 42149 / RIB 40</strain>
    </source>
</reference>
<name>NUF2_ASPOR</name>
<evidence type="ECO:0000250" key="1"/>
<evidence type="ECO:0000255" key="2"/>
<evidence type="ECO:0000256" key="3">
    <source>
        <dbReference type="SAM" id="MobiDB-lite"/>
    </source>
</evidence>
<evidence type="ECO:0000305" key="4"/>
<dbReference type="EMBL" id="BA000051">
    <property type="protein sequence ID" value="BAE60115.1"/>
    <property type="molecule type" value="Genomic_DNA"/>
</dbReference>
<dbReference type="RefSeq" id="XP_001822117.1">
    <property type="nucleotide sequence ID" value="XM_001822065.2"/>
</dbReference>
<dbReference type="SMR" id="Q2UEA0"/>
<dbReference type="STRING" id="510516.Q2UEA0"/>
<dbReference type="EnsemblFungi" id="BAE60115">
    <property type="protein sequence ID" value="BAE60115"/>
    <property type="gene ID" value="AO090026000704"/>
</dbReference>
<dbReference type="GeneID" id="5994145"/>
<dbReference type="KEGG" id="aor:AO090026000704"/>
<dbReference type="VEuPathDB" id="FungiDB:AO090026000704"/>
<dbReference type="HOGENOM" id="CLU_025461_2_1_1"/>
<dbReference type="OMA" id="YLKMEAH"/>
<dbReference type="OrthoDB" id="79301at5052"/>
<dbReference type="Proteomes" id="UP000006564">
    <property type="component" value="Chromosome 3"/>
</dbReference>
<dbReference type="GO" id="GO:0031262">
    <property type="term" value="C:Ndc80 complex"/>
    <property type="evidence" value="ECO:0000250"/>
    <property type="project" value="UniProtKB"/>
</dbReference>
<dbReference type="GO" id="GO:0005634">
    <property type="term" value="C:nucleus"/>
    <property type="evidence" value="ECO:0007669"/>
    <property type="project" value="UniProtKB-SubCell"/>
</dbReference>
<dbReference type="GO" id="GO:0008017">
    <property type="term" value="F:microtubule binding"/>
    <property type="evidence" value="ECO:0000250"/>
    <property type="project" value="UniProtKB"/>
</dbReference>
<dbReference type="GO" id="GO:0044877">
    <property type="term" value="F:protein-containing complex binding"/>
    <property type="evidence" value="ECO:0007669"/>
    <property type="project" value="TreeGrafter"/>
</dbReference>
<dbReference type="GO" id="GO:0051315">
    <property type="term" value="P:attachment of mitotic spindle microtubules to kinetochore"/>
    <property type="evidence" value="ECO:0007669"/>
    <property type="project" value="TreeGrafter"/>
</dbReference>
<dbReference type="GO" id="GO:0051301">
    <property type="term" value="P:cell division"/>
    <property type="evidence" value="ECO:0007669"/>
    <property type="project" value="UniProtKB-KW"/>
</dbReference>
<dbReference type="GO" id="GO:0051383">
    <property type="term" value="P:kinetochore organization"/>
    <property type="evidence" value="ECO:0007669"/>
    <property type="project" value="TreeGrafter"/>
</dbReference>
<dbReference type="GO" id="GO:0045132">
    <property type="term" value="P:meiotic chromosome segregation"/>
    <property type="evidence" value="ECO:0007669"/>
    <property type="project" value="TreeGrafter"/>
</dbReference>
<dbReference type="GO" id="GO:0007052">
    <property type="term" value="P:mitotic spindle organization"/>
    <property type="evidence" value="ECO:0007669"/>
    <property type="project" value="TreeGrafter"/>
</dbReference>
<dbReference type="FunFam" id="1.10.418.60:FF:000003">
    <property type="entry name" value="Probable kinetochore protein nuf2"/>
    <property type="match status" value="1"/>
</dbReference>
<dbReference type="Gene3D" id="1.10.418.60">
    <property type="entry name" value="Ncd80 complex, Nuf2 subunit"/>
    <property type="match status" value="1"/>
</dbReference>
<dbReference type="InterPro" id="IPR005549">
    <property type="entry name" value="Kinetochore_Nuf2_N"/>
</dbReference>
<dbReference type="InterPro" id="IPR041112">
    <property type="entry name" value="Nuf2_DHR10-like"/>
</dbReference>
<dbReference type="InterPro" id="IPR038275">
    <property type="entry name" value="Nuf2_N_sf"/>
</dbReference>
<dbReference type="PANTHER" id="PTHR21650:SF2">
    <property type="entry name" value="KINETOCHORE PROTEIN NUF2"/>
    <property type="match status" value="1"/>
</dbReference>
<dbReference type="PANTHER" id="PTHR21650">
    <property type="entry name" value="MEMBRALIN/KINETOCHORE PROTEIN NUF2"/>
    <property type="match status" value="1"/>
</dbReference>
<dbReference type="Pfam" id="PF03800">
    <property type="entry name" value="Nuf2"/>
    <property type="match status" value="1"/>
</dbReference>
<dbReference type="Pfam" id="PF18595">
    <property type="entry name" value="Nuf2_DHR10-like"/>
    <property type="match status" value="1"/>
</dbReference>
<protein>
    <recommendedName>
        <fullName>Probable kinetochore protein nuf2</fullName>
    </recommendedName>
</protein>
<feature type="chain" id="PRO_0000246646" description="Probable kinetochore protein nuf2">
    <location>
        <begin position="1"/>
        <end position="463"/>
    </location>
</feature>
<feature type="region of interest" description="Disordered" evidence="3">
    <location>
        <begin position="1"/>
        <end position="29"/>
    </location>
</feature>
<feature type="region of interest" description="Disordered" evidence="3">
    <location>
        <begin position="330"/>
        <end position="357"/>
    </location>
</feature>
<feature type="coiled-coil region" evidence="2">
    <location>
        <begin position="166"/>
        <end position="455"/>
    </location>
</feature>
<feature type="compositionally biased region" description="Polar residues" evidence="3">
    <location>
        <begin position="1"/>
        <end position="14"/>
    </location>
</feature>
<feature type="compositionally biased region" description="Basic and acidic residues" evidence="3">
    <location>
        <begin position="337"/>
        <end position="357"/>
    </location>
</feature>
<organism>
    <name type="scientific">Aspergillus oryzae (strain ATCC 42149 / RIB 40)</name>
    <name type="common">Yellow koji mold</name>
    <dbReference type="NCBI Taxonomy" id="510516"/>
    <lineage>
        <taxon>Eukaryota</taxon>
        <taxon>Fungi</taxon>
        <taxon>Dikarya</taxon>
        <taxon>Ascomycota</taxon>
        <taxon>Pezizomycotina</taxon>
        <taxon>Eurotiomycetes</taxon>
        <taxon>Eurotiomycetidae</taxon>
        <taxon>Eurotiales</taxon>
        <taxon>Aspergillaceae</taxon>
        <taxon>Aspergillus</taxon>
        <taxon>Aspergillus subgen. Circumdati</taxon>
    </lineage>
</organism>
<sequence length="463" mass="54522">MAYNHRMSQQFRGSQQHHGRGRKKEDENDALMRLPDKEIAGCINDIGIPFTAADLIKPNPQQIQMVFEWFAELLMNITHEAVEPAMRAAADDVGGDFPDIVPTDTRNLMGFFVSLRKLMMECGVNDFTFTDLTKPTHDRLVKIFSYLINFVRFRESQTPVIDEHFNKSEKTKARIDTLYAENQEMEQRLEEMRRNLRANEAQVKEKVRRNDELKARLLELRRNQERVAETLERVKADKTRRQTQLEEKTEKVVRTRQEVEKLRPYAMESPVSLQASLTELSENLLREKAQIDAMEKRARALQTSSDTFTVVSNDVQACVKLLEDISVELQKEEDEESRASRNKEAISERGNSVREVEQTEKLLQRQLARWNERIETLRKNAQEKAEAAQARMEELREVQKQLREERAEKQRDMERRRIRIEQTEKKMVDLKENIESEIQSAHDEYLRLESHIKLYITEMEKCI</sequence>
<keyword id="KW-0131">Cell cycle</keyword>
<keyword id="KW-0132">Cell division</keyword>
<keyword id="KW-0137">Centromere</keyword>
<keyword id="KW-0158">Chromosome</keyword>
<keyword id="KW-0175">Coiled coil</keyword>
<keyword id="KW-0995">Kinetochore</keyword>
<keyword id="KW-0498">Mitosis</keyword>
<keyword id="KW-0539">Nucleus</keyword>
<keyword id="KW-1185">Reference proteome</keyword>
<proteinExistence type="inferred from homology"/>
<accession>Q2UEA0</accession>
<gene>
    <name type="primary">nuf2</name>
    <name type="ORF">AO090026000704</name>
</gene>
<comment type="function">
    <text evidence="1">Acts as a component of the essential kinetochore-associated NDC80 complex, which is required for chromosome segregation and spindle checkpoint activity.</text>
</comment>
<comment type="subunit">
    <text evidence="1">Component of the NDC80 complex, which consists of ndc80, nuf2, spc24 and spc25.</text>
</comment>
<comment type="subcellular location">
    <subcellularLocation>
        <location evidence="1">Nucleus</location>
    </subcellularLocation>
    <subcellularLocation>
        <location evidence="1">Chromosome</location>
        <location evidence="1">Centromere</location>
        <location evidence="1">Kinetochore</location>
    </subcellularLocation>
    <text evidence="1">Associated with kinetochores.</text>
</comment>
<comment type="similarity">
    <text evidence="4">Belongs to the NUF2 family.</text>
</comment>